<gene>
    <name evidence="1" type="primary">gatB</name>
    <name type="ordered locus">BAPKO_0350</name>
    <name type="ordered locus">BafPKo_0341</name>
</gene>
<keyword id="KW-0067">ATP-binding</keyword>
<keyword id="KW-0436">Ligase</keyword>
<keyword id="KW-0547">Nucleotide-binding</keyword>
<keyword id="KW-0648">Protein biosynthesis</keyword>
<reference key="1">
    <citation type="journal article" date="2006" name="BMC Genomics">
        <title>Comparative genome analysis: selection pressure on the Borrelia vls cassettes is essential for infectivity.</title>
        <authorList>
            <person name="Gloeckner G."/>
            <person name="Schulte-Spechtel U."/>
            <person name="Schilhabel M."/>
            <person name="Felder M."/>
            <person name="Suehnel J."/>
            <person name="Wilske B."/>
            <person name="Platzer M."/>
        </authorList>
    </citation>
    <scope>NUCLEOTIDE SEQUENCE [LARGE SCALE GENOMIC DNA]</scope>
    <source>
        <strain>PKo</strain>
    </source>
</reference>
<reference key="2">
    <citation type="journal article" date="2011" name="J. Bacteriol.">
        <title>Whole-genome sequences of two Borrelia afzelii and two Borrelia garinii Lyme disease agent isolates.</title>
        <authorList>
            <person name="Casjens S.R."/>
            <person name="Mongodin E.F."/>
            <person name="Qiu W.G."/>
            <person name="Dunn J.J."/>
            <person name="Luft B.J."/>
            <person name="Fraser-Liggett C.M."/>
            <person name="Schutzer S.E."/>
        </authorList>
    </citation>
    <scope>NUCLEOTIDE SEQUENCE [LARGE SCALE GENOMIC DNA]</scope>
    <source>
        <strain>PKo</strain>
    </source>
</reference>
<proteinExistence type="inferred from homology"/>
<accession>Q0SNH1</accession>
<accession>G0IRQ7</accession>
<feature type="chain" id="PRO_1000015937" description="Aspartyl/glutamyl-tRNA(Asn/Gln) amidotransferase subunit B">
    <location>
        <begin position="1"/>
        <end position="485"/>
    </location>
</feature>
<evidence type="ECO:0000255" key="1">
    <source>
        <dbReference type="HAMAP-Rule" id="MF_00121"/>
    </source>
</evidence>
<name>GATB_BORAP</name>
<protein>
    <recommendedName>
        <fullName evidence="1">Aspartyl/glutamyl-tRNA(Asn/Gln) amidotransferase subunit B</fullName>
        <shortName evidence="1">Asp/Glu-ADT subunit B</shortName>
        <ecNumber evidence="1">6.3.5.-</ecNumber>
    </recommendedName>
</protein>
<organism>
    <name type="scientific">Borreliella afzelii (strain PKo)</name>
    <name type="common">Borrelia afzelii</name>
    <dbReference type="NCBI Taxonomy" id="390236"/>
    <lineage>
        <taxon>Bacteria</taxon>
        <taxon>Pseudomonadati</taxon>
        <taxon>Spirochaetota</taxon>
        <taxon>Spirochaetia</taxon>
        <taxon>Spirochaetales</taxon>
        <taxon>Borreliaceae</taxon>
        <taxon>Borreliella</taxon>
    </lineage>
</organism>
<sequence length="485" mass="54762">MEYKLVIGLEIHIQLGLKTKAFCGCKNEFGGVPNSRICPICLGLPGSLPSVNVELINSAILAGHATNSKIRRVVKFDRKHYYYPDLPKGYQISQNDKPICEGGSLLIETPSGFKKINIIRIHMEEDSGKSLHLLDSENQSYIDFNRSGAPLLEIVSAPDIGNGDEAVAFLSSLREIFRYLDLSECNMENGSFRCDVNVNLIVNESGIEYKTPIAEIKNLNSFKSIKAAIEYEELRQQEEWIQFRKTLDSCGKHTRGFDDKSGITVIQRNKETVSDYRYFQEPDLPLIEIDDFYIDNIKNLKLIELPFDARVRLKAQYGLSDFDVTTLTSDKHLLRYFEDAVINSSDPKKVANWILSEVLSVLNDKGISVLEFNLLPSHITELVEFIVADKISGKMAKKVFSEMMARKVPASVIISENQLEQISDEFVIKQIVLEVLNENPKSIELYKKGKDHAIKFMMGQIMKKSSGKINPILANEILLQSLANV</sequence>
<dbReference type="EC" id="6.3.5.-" evidence="1"/>
<dbReference type="EMBL" id="CP000395">
    <property type="protein sequence ID" value="ABH01607.1"/>
    <property type="molecule type" value="Genomic_DNA"/>
</dbReference>
<dbReference type="EMBL" id="CP002933">
    <property type="protein sequence ID" value="AEL69567.1"/>
    <property type="molecule type" value="Genomic_DNA"/>
</dbReference>
<dbReference type="RefSeq" id="WP_004790359.1">
    <property type="nucleotide sequence ID" value="NZ_CP160066.1"/>
</dbReference>
<dbReference type="SMR" id="Q0SNH1"/>
<dbReference type="STRING" id="29518.BLA32_02605"/>
<dbReference type="GeneID" id="76831874"/>
<dbReference type="KEGG" id="baf:BAPKO_0350"/>
<dbReference type="KEGG" id="bafz:BafPKo_0341"/>
<dbReference type="PATRIC" id="fig|390236.22.peg.334"/>
<dbReference type="eggNOG" id="COG0064">
    <property type="taxonomic scope" value="Bacteria"/>
</dbReference>
<dbReference type="HOGENOM" id="CLU_019240_0_0_12"/>
<dbReference type="OrthoDB" id="9804078at2"/>
<dbReference type="Proteomes" id="UP000005216">
    <property type="component" value="Chromosome"/>
</dbReference>
<dbReference type="GO" id="GO:0050566">
    <property type="term" value="F:asparaginyl-tRNA synthase (glutamine-hydrolyzing) activity"/>
    <property type="evidence" value="ECO:0007669"/>
    <property type="project" value="RHEA"/>
</dbReference>
<dbReference type="GO" id="GO:0005524">
    <property type="term" value="F:ATP binding"/>
    <property type="evidence" value="ECO:0007669"/>
    <property type="project" value="UniProtKB-KW"/>
</dbReference>
<dbReference type="GO" id="GO:0050567">
    <property type="term" value="F:glutaminyl-tRNA synthase (glutamine-hydrolyzing) activity"/>
    <property type="evidence" value="ECO:0007669"/>
    <property type="project" value="UniProtKB-UniRule"/>
</dbReference>
<dbReference type="GO" id="GO:0070681">
    <property type="term" value="P:glutaminyl-tRNAGln biosynthesis via transamidation"/>
    <property type="evidence" value="ECO:0007669"/>
    <property type="project" value="TreeGrafter"/>
</dbReference>
<dbReference type="GO" id="GO:0006412">
    <property type="term" value="P:translation"/>
    <property type="evidence" value="ECO:0007669"/>
    <property type="project" value="UniProtKB-UniRule"/>
</dbReference>
<dbReference type="FunFam" id="1.10.10.410:FF:000001">
    <property type="entry name" value="Aspartyl/glutamyl-tRNA(Asn/Gln) amidotransferase subunit B"/>
    <property type="match status" value="1"/>
</dbReference>
<dbReference type="Gene3D" id="1.10.10.410">
    <property type="match status" value="1"/>
</dbReference>
<dbReference type="HAMAP" id="MF_00121">
    <property type="entry name" value="GatB"/>
    <property type="match status" value="1"/>
</dbReference>
<dbReference type="InterPro" id="IPR017959">
    <property type="entry name" value="Asn/Gln-tRNA_amidoTrfase_suB/E"/>
</dbReference>
<dbReference type="InterPro" id="IPR006075">
    <property type="entry name" value="Asn/Gln-tRNA_Trfase_suB/E_cat"/>
</dbReference>
<dbReference type="InterPro" id="IPR018027">
    <property type="entry name" value="Asn/Gln_amidotransferase"/>
</dbReference>
<dbReference type="InterPro" id="IPR003789">
    <property type="entry name" value="Asn/Gln_tRNA_amidoTrase-B-like"/>
</dbReference>
<dbReference type="InterPro" id="IPR004413">
    <property type="entry name" value="GatB"/>
</dbReference>
<dbReference type="InterPro" id="IPR023168">
    <property type="entry name" value="GatB_Yqey_C_2"/>
</dbReference>
<dbReference type="InterPro" id="IPR017958">
    <property type="entry name" value="Gln-tRNA_amidoTrfase_suB_CS"/>
</dbReference>
<dbReference type="InterPro" id="IPR014746">
    <property type="entry name" value="Gln_synth/guanido_kin_cat_dom"/>
</dbReference>
<dbReference type="NCBIfam" id="TIGR00133">
    <property type="entry name" value="gatB"/>
    <property type="match status" value="1"/>
</dbReference>
<dbReference type="NCBIfam" id="NF004012">
    <property type="entry name" value="PRK05477.1-2"/>
    <property type="match status" value="1"/>
</dbReference>
<dbReference type="NCBIfam" id="NF004014">
    <property type="entry name" value="PRK05477.1-4"/>
    <property type="match status" value="1"/>
</dbReference>
<dbReference type="PANTHER" id="PTHR11659">
    <property type="entry name" value="GLUTAMYL-TRNA GLN AMIDOTRANSFERASE SUBUNIT B MITOCHONDRIAL AND PROKARYOTIC PET112-RELATED"/>
    <property type="match status" value="1"/>
</dbReference>
<dbReference type="PANTHER" id="PTHR11659:SF0">
    <property type="entry name" value="GLUTAMYL-TRNA(GLN) AMIDOTRANSFERASE SUBUNIT B, MITOCHONDRIAL"/>
    <property type="match status" value="1"/>
</dbReference>
<dbReference type="Pfam" id="PF02934">
    <property type="entry name" value="GatB_N"/>
    <property type="match status" value="1"/>
</dbReference>
<dbReference type="Pfam" id="PF02637">
    <property type="entry name" value="GatB_Yqey"/>
    <property type="match status" value="1"/>
</dbReference>
<dbReference type="SMART" id="SM00845">
    <property type="entry name" value="GatB_Yqey"/>
    <property type="match status" value="1"/>
</dbReference>
<dbReference type="SUPFAM" id="SSF89095">
    <property type="entry name" value="GatB/YqeY motif"/>
    <property type="match status" value="1"/>
</dbReference>
<dbReference type="SUPFAM" id="SSF55931">
    <property type="entry name" value="Glutamine synthetase/guanido kinase"/>
    <property type="match status" value="1"/>
</dbReference>
<dbReference type="PROSITE" id="PS01234">
    <property type="entry name" value="GATB"/>
    <property type="match status" value="1"/>
</dbReference>
<comment type="function">
    <text evidence="1">Allows the formation of correctly charged Asn-tRNA(Asn) or Gln-tRNA(Gln) through the transamidation of misacylated Asp-tRNA(Asn) or Glu-tRNA(Gln) in organisms which lack either or both of asparaginyl-tRNA or glutaminyl-tRNA synthetases. The reaction takes place in the presence of glutamine and ATP through an activated phospho-Asp-tRNA(Asn) or phospho-Glu-tRNA(Gln).</text>
</comment>
<comment type="catalytic activity">
    <reaction evidence="1">
        <text>L-glutamyl-tRNA(Gln) + L-glutamine + ATP + H2O = L-glutaminyl-tRNA(Gln) + L-glutamate + ADP + phosphate + H(+)</text>
        <dbReference type="Rhea" id="RHEA:17521"/>
        <dbReference type="Rhea" id="RHEA-COMP:9681"/>
        <dbReference type="Rhea" id="RHEA-COMP:9684"/>
        <dbReference type="ChEBI" id="CHEBI:15377"/>
        <dbReference type="ChEBI" id="CHEBI:15378"/>
        <dbReference type="ChEBI" id="CHEBI:29985"/>
        <dbReference type="ChEBI" id="CHEBI:30616"/>
        <dbReference type="ChEBI" id="CHEBI:43474"/>
        <dbReference type="ChEBI" id="CHEBI:58359"/>
        <dbReference type="ChEBI" id="CHEBI:78520"/>
        <dbReference type="ChEBI" id="CHEBI:78521"/>
        <dbReference type="ChEBI" id="CHEBI:456216"/>
    </reaction>
</comment>
<comment type="catalytic activity">
    <reaction evidence="1">
        <text>L-aspartyl-tRNA(Asn) + L-glutamine + ATP + H2O = L-asparaginyl-tRNA(Asn) + L-glutamate + ADP + phosphate + 2 H(+)</text>
        <dbReference type="Rhea" id="RHEA:14513"/>
        <dbReference type="Rhea" id="RHEA-COMP:9674"/>
        <dbReference type="Rhea" id="RHEA-COMP:9677"/>
        <dbReference type="ChEBI" id="CHEBI:15377"/>
        <dbReference type="ChEBI" id="CHEBI:15378"/>
        <dbReference type="ChEBI" id="CHEBI:29985"/>
        <dbReference type="ChEBI" id="CHEBI:30616"/>
        <dbReference type="ChEBI" id="CHEBI:43474"/>
        <dbReference type="ChEBI" id="CHEBI:58359"/>
        <dbReference type="ChEBI" id="CHEBI:78515"/>
        <dbReference type="ChEBI" id="CHEBI:78516"/>
        <dbReference type="ChEBI" id="CHEBI:456216"/>
    </reaction>
</comment>
<comment type="subunit">
    <text evidence="1">Heterotrimer of A, B and C subunits.</text>
</comment>
<comment type="similarity">
    <text evidence="1">Belongs to the GatB/GatE family. GatB subfamily.</text>
</comment>